<keyword id="KW-0235">DNA replication</keyword>
<keyword id="KW-0238">DNA-binding</keyword>
<keyword id="KW-0539">Nucleus</keyword>
<name>DPB2_CRYNB</name>
<sequence length="541" mass="61072">MVNQMRSAIVKVFSTKHSLTLPAPALHYIEEVLIENEIPEDEWMVGLEFWAKEYLKAEDSSSLVSLQALKKAYENLQLGTTEDTQVADPSEVNVESHFSVVDSFDMPAMRYDPVRSGFVQSKAQPSVAGQASSRSAFLRERWAIIKEIILRNENFTPPAIGGHDRANYLKLTSIRNLLGRAGQLFLLFGMLARNEEGKLCLEDGESRVVLDMEDAVPGEGLFTEGCMVLIEGEYTVEETVRVLAMGHPPSERRNIARSLHGHVDFLGGGAVSLKEEQKYNPTVLANTQISFVILSDVWLDHPRTMPALRQMFEGYANTAEYRPMVFVLCGNFCQGGWEGQEGLKRYSRGFNSLAELLQSIPLLHSSHFVFVPGPSDPWSSTTLPRPSLPSAFTTRLSNRIPNARFVSNPCRLKYFGMEIVICREDLMGKMMRNLVVVKEGEEMNMKRYLVQTILDQAHLSPLPISVRPTLWEYDHALRLYPMPSAVVLADKYERYELTYEGCHVFNPGKFVGGIGEDGWEFEWSMYYPATGRSERSVLTME</sequence>
<feature type="chain" id="PRO_0000410066" description="DNA polymerase epsilon subunit B">
    <location>
        <begin position="1"/>
        <end position="541"/>
    </location>
</feature>
<reference key="1">
    <citation type="journal article" date="2005" name="Science">
        <title>The genome of the basidiomycetous yeast and human pathogen Cryptococcus neoformans.</title>
        <authorList>
            <person name="Loftus B.J."/>
            <person name="Fung E."/>
            <person name="Roncaglia P."/>
            <person name="Rowley D."/>
            <person name="Amedeo P."/>
            <person name="Bruno D."/>
            <person name="Vamathevan J."/>
            <person name="Miranda M."/>
            <person name="Anderson I.J."/>
            <person name="Fraser J.A."/>
            <person name="Allen J.E."/>
            <person name="Bosdet I.E."/>
            <person name="Brent M.R."/>
            <person name="Chiu R."/>
            <person name="Doering T.L."/>
            <person name="Donlin M.J."/>
            <person name="D'Souza C.A."/>
            <person name="Fox D.S."/>
            <person name="Grinberg V."/>
            <person name="Fu J."/>
            <person name="Fukushima M."/>
            <person name="Haas B.J."/>
            <person name="Huang J.C."/>
            <person name="Janbon G."/>
            <person name="Jones S.J.M."/>
            <person name="Koo H.L."/>
            <person name="Krzywinski M.I."/>
            <person name="Kwon-Chung K.J."/>
            <person name="Lengeler K.B."/>
            <person name="Maiti R."/>
            <person name="Marra M.A."/>
            <person name="Marra R.E."/>
            <person name="Mathewson C.A."/>
            <person name="Mitchell T.G."/>
            <person name="Pertea M."/>
            <person name="Riggs F.R."/>
            <person name="Salzberg S.L."/>
            <person name="Schein J.E."/>
            <person name="Shvartsbeyn A."/>
            <person name="Shin H."/>
            <person name="Shumway M."/>
            <person name="Specht C.A."/>
            <person name="Suh B.B."/>
            <person name="Tenney A."/>
            <person name="Utterback T.R."/>
            <person name="Wickes B.L."/>
            <person name="Wortman J.R."/>
            <person name="Wye N.H."/>
            <person name="Kronstad J.W."/>
            <person name="Lodge J.K."/>
            <person name="Heitman J."/>
            <person name="Davis R.W."/>
            <person name="Fraser C.M."/>
            <person name="Hyman R.W."/>
        </authorList>
    </citation>
    <scope>NUCLEOTIDE SEQUENCE [LARGE SCALE GENOMIC DNA]</scope>
    <source>
        <strain>B-3501A</strain>
    </source>
</reference>
<proteinExistence type="inferred from homology"/>
<accession>P0CN25</accession>
<accession>Q55R91</accession>
<accession>Q5KEX9</accession>
<protein>
    <recommendedName>
        <fullName>DNA polymerase epsilon subunit B</fullName>
    </recommendedName>
    <alternativeName>
        <fullName>DNA polymerase II subunit 2</fullName>
    </alternativeName>
</protein>
<dbReference type="EMBL" id="AAEY01000030">
    <property type="protein sequence ID" value="EAL20288.1"/>
    <property type="molecule type" value="Genomic_DNA"/>
</dbReference>
<dbReference type="RefSeq" id="XP_774935.1">
    <property type="nucleotide sequence ID" value="XM_769842.1"/>
</dbReference>
<dbReference type="SMR" id="P0CN25"/>
<dbReference type="EnsemblFungi" id="AAW44369">
    <property type="protein sequence ID" value="AAW44369"/>
    <property type="gene ID" value="CNF03830"/>
</dbReference>
<dbReference type="GeneID" id="4936652"/>
<dbReference type="KEGG" id="cnb:CNBF1000"/>
<dbReference type="VEuPathDB" id="FungiDB:CNBF1000"/>
<dbReference type="HOGENOM" id="CLU_010628_2_1_1"/>
<dbReference type="OrthoDB" id="1880at5206"/>
<dbReference type="GO" id="GO:0000785">
    <property type="term" value="C:chromatin"/>
    <property type="evidence" value="ECO:0007669"/>
    <property type="project" value="EnsemblFungi"/>
</dbReference>
<dbReference type="GO" id="GO:0008622">
    <property type="term" value="C:epsilon DNA polymerase complex"/>
    <property type="evidence" value="ECO:0007669"/>
    <property type="project" value="InterPro"/>
</dbReference>
<dbReference type="GO" id="GO:0003677">
    <property type="term" value="F:DNA binding"/>
    <property type="evidence" value="ECO:0007669"/>
    <property type="project" value="UniProtKB-KW"/>
</dbReference>
<dbReference type="GO" id="GO:0140529">
    <property type="term" value="P:CMG complex assembly"/>
    <property type="evidence" value="ECO:0007669"/>
    <property type="project" value="EnsemblFungi"/>
</dbReference>
<dbReference type="GO" id="GO:0042276">
    <property type="term" value="P:error-prone translesion synthesis"/>
    <property type="evidence" value="ECO:0007669"/>
    <property type="project" value="TreeGrafter"/>
</dbReference>
<dbReference type="FunFam" id="3.60.21.50:FF:000010">
    <property type="entry name" value="DNA polymerase epsilon subunit"/>
    <property type="match status" value="1"/>
</dbReference>
<dbReference type="Gene3D" id="3.60.21.50">
    <property type="match status" value="1"/>
</dbReference>
<dbReference type="InterPro" id="IPR007185">
    <property type="entry name" value="DNA_pol_a/d/e_bsu"/>
</dbReference>
<dbReference type="InterPro" id="IPR016266">
    <property type="entry name" value="POLE2"/>
</dbReference>
<dbReference type="PANTHER" id="PTHR12708:SF0">
    <property type="entry name" value="DNA POLYMERASE EPSILON SUBUNIT 2"/>
    <property type="match status" value="1"/>
</dbReference>
<dbReference type="PANTHER" id="PTHR12708">
    <property type="entry name" value="DNA POLYMERASE EPSILON SUBUNIT B"/>
    <property type="match status" value="1"/>
</dbReference>
<dbReference type="Pfam" id="PF04042">
    <property type="entry name" value="DNA_pol_E_B"/>
    <property type="match status" value="1"/>
</dbReference>
<dbReference type="PIRSF" id="PIRSF000799">
    <property type="entry name" value="DNA_pol_eps_2"/>
    <property type="match status" value="1"/>
</dbReference>
<comment type="function">
    <text evidence="2">As accessory component of the DNA polymerase epsilon (DNA polymerase II) participates in chromosomal DNA replication.</text>
</comment>
<comment type="subunit">
    <text evidence="1">Heterotetramer. Consists of four subunits: POL2, DPB2, DPB3 and DPB4 (By similarity).</text>
</comment>
<comment type="subcellular location">
    <subcellularLocation>
        <location evidence="1">Nucleus</location>
    </subcellularLocation>
</comment>
<comment type="miscellaneous">
    <text>In eukaryotes there are five DNA polymerases: alpha, beta, gamma, delta, and epsilon which are responsible for different reactions of DNA synthesis.</text>
</comment>
<comment type="similarity">
    <text evidence="3">Belongs to the DNA polymerase epsilon subunit B family.</text>
</comment>
<organism>
    <name type="scientific">Cryptococcus neoformans var. neoformans serotype D (strain B-3501A)</name>
    <name type="common">Filobasidiella neoformans</name>
    <dbReference type="NCBI Taxonomy" id="283643"/>
    <lineage>
        <taxon>Eukaryota</taxon>
        <taxon>Fungi</taxon>
        <taxon>Dikarya</taxon>
        <taxon>Basidiomycota</taxon>
        <taxon>Agaricomycotina</taxon>
        <taxon>Tremellomycetes</taxon>
        <taxon>Tremellales</taxon>
        <taxon>Cryptococcaceae</taxon>
        <taxon>Cryptococcus</taxon>
        <taxon>Cryptococcus neoformans species complex</taxon>
    </lineage>
</organism>
<gene>
    <name type="primary">DPB2</name>
    <name type="ordered locus">CNBF1000</name>
</gene>
<evidence type="ECO:0000250" key="1"/>
<evidence type="ECO:0000250" key="2">
    <source>
        <dbReference type="UniProtKB" id="P24482"/>
    </source>
</evidence>
<evidence type="ECO:0000305" key="3"/>